<proteinExistence type="evidence at protein level"/>
<protein>
    <recommendedName>
        <fullName>Transmembrane protein 19</fullName>
    </recommendedName>
</protein>
<gene>
    <name type="primary">Tmem19</name>
</gene>
<name>TMM19_MOUSE</name>
<comment type="subcellular location">
    <subcellularLocation>
        <location evidence="3">Membrane</location>
        <topology evidence="3">Multi-pass membrane protein</topology>
    </subcellularLocation>
</comment>
<comment type="alternative products">
    <event type="alternative splicing"/>
    <isoform>
        <id>Q91W52-1</id>
        <name>1</name>
        <sequence type="displayed"/>
    </isoform>
    <isoform>
        <id>Q91W52-2</id>
        <name>2</name>
        <sequence type="described" ref="VSP_024661"/>
    </isoform>
</comment>
<comment type="similarity">
    <text evidence="3">Belongs to the TMEM19 family.</text>
</comment>
<dbReference type="EMBL" id="AK034298">
    <property type="protein sequence ID" value="BAC28663.1"/>
    <property type="molecule type" value="mRNA"/>
</dbReference>
<dbReference type="EMBL" id="AK042426">
    <property type="protein sequence ID" value="BAC31256.1"/>
    <property type="molecule type" value="mRNA"/>
</dbReference>
<dbReference type="EMBL" id="AK138931">
    <property type="protein sequence ID" value="BAE23820.1"/>
    <property type="molecule type" value="mRNA"/>
</dbReference>
<dbReference type="EMBL" id="AK155275">
    <property type="protein sequence ID" value="BAE33158.1"/>
    <property type="molecule type" value="mRNA"/>
</dbReference>
<dbReference type="EMBL" id="AK170143">
    <property type="protein sequence ID" value="BAE41594.1"/>
    <property type="molecule type" value="mRNA"/>
</dbReference>
<dbReference type="EMBL" id="AK171087">
    <property type="protein sequence ID" value="BAE42240.1"/>
    <property type="molecule type" value="mRNA"/>
</dbReference>
<dbReference type="EMBL" id="BC016895">
    <property type="protein sequence ID" value="AAH16895.1"/>
    <property type="molecule type" value="mRNA"/>
</dbReference>
<dbReference type="CCDS" id="CCDS24178.1">
    <molecule id="Q91W52-1"/>
</dbReference>
<dbReference type="CCDS" id="CCDS88087.1">
    <molecule id="Q91W52-2"/>
</dbReference>
<dbReference type="RefSeq" id="NP_001346399.1">
    <molecule id="Q91W52-2"/>
    <property type="nucleotide sequence ID" value="NM_001359470.1"/>
</dbReference>
<dbReference type="RefSeq" id="NP_001346400.1">
    <molecule id="Q91W52-1"/>
    <property type="nucleotide sequence ID" value="NM_001359471.2"/>
</dbReference>
<dbReference type="RefSeq" id="NP_001346401.1">
    <molecule id="Q91W52-1"/>
    <property type="nucleotide sequence ID" value="NM_001359472.2"/>
</dbReference>
<dbReference type="RefSeq" id="NP_598444.1">
    <molecule id="Q91W52-1"/>
    <property type="nucleotide sequence ID" value="NM_133683.5"/>
</dbReference>
<dbReference type="RefSeq" id="XP_006514038.1">
    <property type="nucleotide sequence ID" value="XM_006513975.1"/>
</dbReference>
<dbReference type="RefSeq" id="XP_006514039.1">
    <property type="nucleotide sequence ID" value="XM_006513976.1"/>
</dbReference>
<dbReference type="RefSeq" id="XP_017169556.1">
    <property type="nucleotide sequence ID" value="XM_017314067.1"/>
</dbReference>
<dbReference type="BioGRID" id="212031">
    <property type="interactions" value="2"/>
</dbReference>
<dbReference type="FunCoup" id="Q91W52">
    <property type="interactions" value="323"/>
</dbReference>
<dbReference type="STRING" id="10090.ENSMUSP00000089808"/>
<dbReference type="PhosphoSitePlus" id="Q91W52"/>
<dbReference type="SwissPalm" id="Q91W52"/>
<dbReference type="jPOST" id="Q91W52"/>
<dbReference type="PaxDb" id="10090-ENSMUSP00000089808"/>
<dbReference type="PeptideAtlas" id="Q91W52"/>
<dbReference type="ProteomicsDB" id="259580">
    <molecule id="Q91W52-1"/>
</dbReference>
<dbReference type="ProteomicsDB" id="259581">
    <molecule id="Q91W52-2"/>
</dbReference>
<dbReference type="Pumba" id="Q91W52"/>
<dbReference type="Antibodypedia" id="17095">
    <property type="antibodies" value="34 antibodies from 10 providers"/>
</dbReference>
<dbReference type="DNASU" id="67226"/>
<dbReference type="Ensembl" id="ENSMUST00000092170.7">
    <molecule id="Q91W52-1"/>
    <property type="protein sequence ID" value="ENSMUSP00000089808.6"/>
    <property type="gene ID" value="ENSMUSG00000069520.7"/>
</dbReference>
<dbReference type="Ensembl" id="ENSMUST00000217887.2">
    <molecule id="Q91W52-2"/>
    <property type="protein sequence ID" value="ENSMUSP00000151334.2"/>
    <property type="gene ID" value="ENSMUSG00000069520.7"/>
</dbReference>
<dbReference type="GeneID" id="67226"/>
<dbReference type="KEGG" id="mmu:67226"/>
<dbReference type="UCSC" id="uc007hba.1">
    <molecule id="Q91W52-1"/>
    <property type="organism name" value="mouse"/>
</dbReference>
<dbReference type="UCSC" id="uc007hbc.1">
    <molecule id="Q91W52-2"/>
    <property type="organism name" value="mouse"/>
</dbReference>
<dbReference type="AGR" id="MGI:1914476"/>
<dbReference type="CTD" id="55266"/>
<dbReference type="MGI" id="MGI:1914476">
    <property type="gene designation" value="Tmem19"/>
</dbReference>
<dbReference type="VEuPathDB" id="HostDB:ENSMUSG00000069520"/>
<dbReference type="eggNOG" id="KOG4491">
    <property type="taxonomic scope" value="Eukaryota"/>
</dbReference>
<dbReference type="GeneTree" id="ENSGT00390000017998"/>
<dbReference type="HOGENOM" id="CLU_036918_3_1_1"/>
<dbReference type="InParanoid" id="Q91W52"/>
<dbReference type="OMA" id="MSSFACC"/>
<dbReference type="PhylomeDB" id="Q91W52"/>
<dbReference type="TreeFam" id="TF300063"/>
<dbReference type="BioGRID-ORCS" id="67226">
    <property type="hits" value="3 hits in 76 CRISPR screens"/>
</dbReference>
<dbReference type="ChiTaRS" id="Tmem19">
    <property type="organism name" value="mouse"/>
</dbReference>
<dbReference type="PRO" id="PR:Q91W52"/>
<dbReference type="Proteomes" id="UP000000589">
    <property type="component" value="Chromosome 10"/>
</dbReference>
<dbReference type="RNAct" id="Q91W52">
    <property type="molecule type" value="protein"/>
</dbReference>
<dbReference type="Bgee" id="ENSMUSG00000069520">
    <property type="expression patterns" value="Expressed in right kidney and 250 other cell types or tissues"/>
</dbReference>
<dbReference type="ExpressionAtlas" id="Q91W52">
    <property type="expression patterns" value="baseline and differential"/>
</dbReference>
<dbReference type="GO" id="GO:0016020">
    <property type="term" value="C:membrane"/>
    <property type="evidence" value="ECO:0007669"/>
    <property type="project" value="UniProtKB-SubCell"/>
</dbReference>
<dbReference type="InterPro" id="IPR002794">
    <property type="entry name" value="DUF92_TMEM19"/>
</dbReference>
<dbReference type="PANTHER" id="PTHR13353">
    <property type="entry name" value="TRANSMEMBRANE PROTEIN 19"/>
    <property type="match status" value="1"/>
</dbReference>
<dbReference type="PANTHER" id="PTHR13353:SF5">
    <property type="entry name" value="TRANSMEMBRANE PROTEIN 19"/>
    <property type="match status" value="1"/>
</dbReference>
<dbReference type="Pfam" id="PF01940">
    <property type="entry name" value="DUF92"/>
    <property type="match status" value="1"/>
</dbReference>
<sequence>MTDSDDTTCKRYIKMITNIVILSLIICISLAFWIMSMTASTYYGNFRPVSPWRWLFSVVVPVVIACNGFKKKSLDHSGALGGLVVGFILTIANFSFFTSLMTFFLSSSKLTKWRGNIKKQLDSEYKEGGQRNWVQVFCNGAVPTELALLYMIENGPGEMPIDFSKQHTASWMCLSLLAALASSAGDTWASEVAPVLSKSSPRLITTWEKVPVGTNGGVTAVGLASSLLGGTFVGLAYFLTQLVFVNDLDISAPQWPIIAFGGVAGLFGSLVDSFLGATMQFSGLDERTGLVVSSPTQETKHIAGKPILDNNAVNLFSSVLVALLLPTAASGFWPRE</sequence>
<accession>Q91W52</accession>
<accession>Q3UU09</accession>
<accession>Q8BY23</accession>
<accession>Q8BZK7</accession>
<reference key="1">
    <citation type="journal article" date="2005" name="Science">
        <title>The transcriptional landscape of the mammalian genome.</title>
        <authorList>
            <person name="Carninci P."/>
            <person name="Kasukawa T."/>
            <person name="Katayama S."/>
            <person name="Gough J."/>
            <person name="Frith M.C."/>
            <person name="Maeda N."/>
            <person name="Oyama R."/>
            <person name="Ravasi T."/>
            <person name="Lenhard B."/>
            <person name="Wells C."/>
            <person name="Kodzius R."/>
            <person name="Shimokawa K."/>
            <person name="Bajic V.B."/>
            <person name="Brenner S.E."/>
            <person name="Batalov S."/>
            <person name="Forrest A.R."/>
            <person name="Zavolan M."/>
            <person name="Davis M.J."/>
            <person name="Wilming L.G."/>
            <person name="Aidinis V."/>
            <person name="Allen J.E."/>
            <person name="Ambesi-Impiombato A."/>
            <person name="Apweiler R."/>
            <person name="Aturaliya R.N."/>
            <person name="Bailey T.L."/>
            <person name="Bansal M."/>
            <person name="Baxter L."/>
            <person name="Beisel K.W."/>
            <person name="Bersano T."/>
            <person name="Bono H."/>
            <person name="Chalk A.M."/>
            <person name="Chiu K.P."/>
            <person name="Choudhary V."/>
            <person name="Christoffels A."/>
            <person name="Clutterbuck D.R."/>
            <person name="Crowe M.L."/>
            <person name="Dalla E."/>
            <person name="Dalrymple B.P."/>
            <person name="de Bono B."/>
            <person name="Della Gatta G."/>
            <person name="di Bernardo D."/>
            <person name="Down T."/>
            <person name="Engstrom P."/>
            <person name="Fagiolini M."/>
            <person name="Faulkner G."/>
            <person name="Fletcher C.F."/>
            <person name="Fukushima T."/>
            <person name="Furuno M."/>
            <person name="Futaki S."/>
            <person name="Gariboldi M."/>
            <person name="Georgii-Hemming P."/>
            <person name="Gingeras T.R."/>
            <person name="Gojobori T."/>
            <person name="Green R.E."/>
            <person name="Gustincich S."/>
            <person name="Harbers M."/>
            <person name="Hayashi Y."/>
            <person name="Hensch T.K."/>
            <person name="Hirokawa N."/>
            <person name="Hill D."/>
            <person name="Huminiecki L."/>
            <person name="Iacono M."/>
            <person name="Ikeo K."/>
            <person name="Iwama A."/>
            <person name="Ishikawa T."/>
            <person name="Jakt M."/>
            <person name="Kanapin A."/>
            <person name="Katoh M."/>
            <person name="Kawasawa Y."/>
            <person name="Kelso J."/>
            <person name="Kitamura H."/>
            <person name="Kitano H."/>
            <person name="Kollias G."/>
            <person name="Krishnan S.P."/>
            <person name="Kruger A."/>
            <person name="Kummerfeld S.K."/>
            <person name="Kurochkin I.V."/>
            <person name="Lareau L.F."/>
            <person name="Lazarevic D."/>
            <person name="Lipovich L."/>
            <person name="Liu J."/>
            <person name="Liuni S."/>
            <person name="McWilliam S."/>
            <person name="Madan Babu M."/>
            <person name="Madera M."/>
            <person name="Marchionni L."/>
            <person name="Matsuda H."/>
            <person name="Matsuzawa S."/>
            <person name="Miki H."/>
            <person name="Mignone F."/>
            <person name="Miyake S."/>
            <person name="Morris K."/>
            <person name="Mottagui-Tabar S."/>
            <person name="Mulder N."/>
            <person name="Nakano N."/>
            <person name="Nakauchi H."/>
            <person name="Ng P."/>
            <person name="Nilsson R."/>
            <person name="Nishiguchi S."/>
            <person name="Nishikawa S."/>
            <person name="Nori F."/>
            <person name="Ohara O."/>
            <person name="Okazaki Y."/>
            <person name="Orlando V."/>
            <person name="Pang K.C."/>
            <person name="Pavan W.J."/>
            <person name="Pavesi G."/>
            <person name="Pesole G."/>
            <person name="Petrovsky N."/>
            <person name="Piazza S."/>
            <person name="Reed J."/>
            <person name="Reid J.F."/>
            <person name="Ring B.Z."/>
            <person name="Ringwald M."/>
            <person name="Rost B."/>
            <person name="Ruan Y."/>
            <person name="Salzberg S.L."/>
            <person name="Sandelin A."/>
            <person name="Schneider C."/>
            <person name="Schoenbach C."/>
            <person name="Sekiguchi K."/>
            <person name="Semple C.A."/>
            <person name="Seno S."/>
            <person name="Sessa L."/>
            <person name="Sheng Y."/>
            <person name="Shibata Y."/>
            <person name="Shimada H."/>
            <person name="Shimada K."/>
            <person name="Silva D."/>
            <person name="Sinclair B."/>
            <person name="Sperling S."/>
            <person name="Stupka E."/>
            <person name="Sugiura K."/>
            <person name="Sultana R."/>
            <person name="Takenaka Y."/>
            <person name="Taki K."/>
            <person name="Tammoja K."/>
            <person name="Tan S.L."/>
            <person name="Tang S."/>
            <person name="Taylor M.S."/>
            <person name="Tegner J."/>
            <person name="Teichmann S.A."/>
            <person name="Ueda H.R."/>
            <person name="van Nimwegen E."/>
            <person name="Verardo R."/>
            <person name="Wei C.L."/>
            <person name="Yagi K."/>
            <person name="Yamanishi H."/>
            <person name="Zabarovsky E."/>
            <person name="Zhu S."/>
            <person name="Zimmer A."/>
            <person name="Hide W."/>
            <person name="Bult C."/>
            <person name="Grimmond S.M."/>
            <person name="Teasdale R.D."/>
            <person name="Liu E.T."/>
            <person name="Brusic V."/>
            <person name="Quackenbush J."/>
            <person name="Wahlestedt C."/>
            <person name="Mattick J.S."/>
            <person name="Hume D.A."/>
            <person name="Kai C."/>
            <person name="Sasaki D."/>
            <person name="Tomaru Y."/>
            <person name="Fukuda S."/>
            <person name="Kanamori-Katayama M."/>
            <person name="Suzuki M."/>
            <person name="Aoki J."/>
            <person name="Arakawa T."/>
            <person name="Iida J."/>
            <person name="Imamura K."/>
            <person name="Itoh M."/>
            <person name="Kato T."/>
            <person name="Kawaji H."/>
            <person name="Kawagashira N."/>
            <person name="Kawashima T."/>
            <person name="Kojima M."/>
            <person name="Kondo S."/>
            <person name="Konno H."/>
            <person name="Nakano K."/>
            <person name="Ninomiya N."/>
            <person name="Nishio T."/>
            <person name="Okada M."/>
            <person name="Plessy C."/>
            <person name="Shibata K."/>
            <person name="Shiraki T."/>
            <person name="Suzuki S."/>
            <person name="Tagami M."/>
            <person name="Waki K."/>
            <person name="Watahiki A."/>
            <person name="Okamura-Oho Y."/>
            <person name="Suzuki H."/>
            <person name="Kawai J."/>
            <person name="Hayashizaki Y."/>
        </authorList>
    </citation>
    <scope>NUCLEOTIDE SEQUENCE [LARGE SCALE MRNA] (ISOFORMS 1 AND 2)</scope>
    <source>
        <strain>C57BL/6J</strain>
        <strain>NOD</strain>
        <tissue>Dendritic cell</tissue>
        <tissue>Diencephalon</tissue>
        <tissue>Thymus</tissue>
    </source>
</reference>
<reference key="2">
    <citation type="journal article" date="2004" name="Genome Res.">
        <title>The status, quality, and expansion of the NIH full-length cDNA project: the Mammalian Gene Collection (MGC).</title>
        <authorList>
            <consortium name="The MGC Project Team"/>
        </authorList>
    </citation>
    <scope>NUCLEOTIDE SEQUENCE [LARGE SCALE MRNA] (ISOFORM 1)</scope>
    <source>
        <strain>FVB/N</strain>
        <tissue>Kidney</tissue>
    </source>
</reference>
<reference key="3">
    <citation type="journal article" date="2010" name="Cell">
        <title>A tissue-specific atlas of mouse protein phosphorylation and expression.</title>
        <authorList>
            <person name="Huttlin E.L."/>
            <person name="Jedrychowski M.P."/>
            <person name="Elias J.E."/>
            <person name="Goswami T."/>
            <person name="Rad R."/>
            <person name="Beausoleil S.A."/>
            <person name="Villen J."/>
            <person name="Haas W."/>
            <person name="Sowa M.E."/>
            <person name="Gygi S.P."/>
        </authorList>
    </citation>
    <scope>IDENTIFICATION BY MASS SPECTROMETRY [LARGE SCALE ANALYSIS]</scope>
    <source>
        <tissue>Brain</tissue>
        <tissue>Kidney</tissue>
        <tissue>Liver</tissue>
        <tissue>Lung</tissue>
        <tissue>Spleen</tissue>
        <tissue>Testis</tissue>
    </source>
</reference>
<organism>
    <name type="scientific">Mus musculus</name>
    <name type="common">Mouse</name>
    <dbReference type="NCBI Taxonomy" id="10090"/>
    <lineage>
        <taxon>Eukaryota</taxon>
        <taxon>Metazoa</taxon>
        <taxon>Chordata</taxon>
        <taxon>Craniata</taxon>
        <taxon>Vertebrata</taxon>
        <taxon>Euteleostomi</taxon>
        <taxon>Mammalia</taxon>
        <taxon>Eutheria</taxon>
        <taxon>Euarchontoglires</taxon>
        <taxon>Glires</taxon>
        <taxon>Rodentia</taxon>
        <taxon>Myomorpha</taxon>
        <taxon>Muroidea</taxon>
        <taxon>Muridae</taxon>
        <taxon>Murinae</taxon>
        <taxon>Mus</taxon>
        <taxon>Mus</taxon>
    </lineage>
</organism>
<evidence type="ECO:0000255" key="1"/>
<evidence type="ECO:0000303" key="2">
    <source>
    </source>
</evidence>
<evidence type="ECO:0000305" key="3"/>
<feature type="chain" id="PRO_0000284795" description="Transmembrane protein 19">
    <location>
        <begin position="1"/>
        <end position="336"/>
    </location>
</feature>
<feature type="transmembrane region" description="Helical" evidence="1">
    <location>
        <begin position="15"/>
        <end position="35"/>
    </location>
</feature>
<feature type="transmembrane region" description="Helical" evidence="1">
    <location>
        <begin position="49"/>
        <end position="69"/>
    </location>
</feature>
<feature type="transmembrane region" description="Helical" evidence="1">
    <location>
        <begin position="78"/>
        <end position="98"/>
    </location>
</feature>
<feature type="transmembrane region" description="Helical" evidence="1">
    <location>
        <begin position="218"/>
        <end position="238"/>
    </location>
</feature>
<feature type="transmembrane region" description="Helical" evidence="1">
    <location>
        <begin position="257"/>
        <end position="277"/>
    </location>
</feature>
<feature type="transmembrane region" description="Helical" evidence="1">
    <location>
        <begin position="313"/>
        <end position="333"/>
    </location>
</feature>
<feature type="splice variant" id="VSP_024661" description="In isoform 2." evidence="2">
    <original>M</original>
    <variation>MLSIPPPQVLVALFSM</variation>
    <location>
        <position position="1"/>
    </location>
</feature>
<feature type="sequence conflict" description="In Ref. 1; BAE23820." evidence="3" ref="1">
    <original>S</original>
    <variation>G</variation>
    <location>
        <position position="182"/>
    </location>
</feature>
<keyword id="KW-0025">Alternative splicing</keyword>
<keyword id="KW-0472">Membrane</keyword>
<keyword id="KW-1185">Reference proteome</keyword>
<keyword id="KW-0812">Transmembrane</keyword>
<keyword id="KW-1133">Transmembrane helix</keyword>